<dbReference type="EMBL" id="AE003853">
    <property type="protein sequence ID" value="AAF95933.1"/>
    <property type="molecule type" value="Genomic_DNA"/>
</dbReference>
<dbReference type="PIR" id="G82511">
    <property type="entry name" value="G82511"/>
</dbReference>
<dbReference type="RefSeq" id="NP_232420.1">
    <property type="nucleotide sequence ID" value="NC_002506.1"/>
</dbReference>
<dbReference type="RefSeq" id="WP_001257973.1">
    <property type="nucleotide sequence ID" value="NZ_LT906615.1"/>
</dbReference>
<dbReference type="STRING" id="243277.VC_A0019"/>
<dbReference type="TCDB" id="1.C.131.1.1">
    <property type="family name" value="the vasx toxin (vasx) family"/>
</dbReference>
<dbReference type="DNASU" id="2612521"/>
<dbReference type="EnsemblBacteria" id="AAF95933">
    <property type="protein sequence ID" value="AAF95933"/>
    <property type="gene ID" value="VC_A0019"/>
</dbReference>
<dbReference type="KEGG" id="vch:VC_A0019"/>
<dbReference type="PATRIC" id="fig|243277.26.peg.2666"/>
<dbReference type="eggNOG" id="COG4104">
    <property type="taxonomic scope" value="Bacteria"/>
</dbReference>
<dbReference type="HOGENOM" id="CLU_082103_0_0_6"/>
<dbReference type="Proteomes" id="UP000000584">
    <property type="component" value="Chromosome 2"/>
</dbReference>
<dbReference type="InterPro" id="IPR025391">
    <property type="entry name" value="DUF4123"/>
</dbReference>
<dbReference type="Pfam" id="PF13503">
    <property type="entry name" value="DUF4123"/>
    <property type="match status" value="1"/>
</dbReference>
<accession>Q9KNE6</accession>
<sequence>MRSTNSFVVHNWVSLVPEMEMDTQERLYLLVDGAQISHLAQALYRLSGELVLEPLYLFPPFEQLKEVSPYLVLATDTVKTWFLEQNQGLAGFFFASLDSIEEIAEQLRRLIQVESPYGSTVFLKMANSECAYVLLSTQCQPLWKVINRAWLPTRQGWQYVQRPELTATQDTPVRFKLTDEQWQRLGNITWLNTLETVERHVQQWFPDLAQQWQSDPELFHRHAQWAYQQGFSSERDLMLFFNVLGFLGVDALEKGKYPEIDPLLHQASSRTPSQRIEAAAELAYQHSQSSQEVQG</sequence>
<reference key="1">
    <citation type="journal article" date="2000" name="Nature">
        <title>DNA sequence of both chromosomes of the cholera pathogen Vibrio cholerae.</title>
        <authorList>
            <person name="Heidelberg J.F."/>
            <person name="Eisen J.A."/>
            <person name="Nelson W.C."/>
            <person name="Clayton R.A."/>
            <person name="Gwinn M.L."/>
            <person name="Dodson R.J."/>
            <person name="Haft D.H."/>
            <person name="Hickey E.K."/>
            <person name="Peterson J.D."/>
            <person name="Umayam L.A."/>
            <person name="Gill S.R."/>
            <person name="Nelson K.E."/>
            <person name="Read T.D."/>
            <person name="Tettelin H."/>
            <person name="Richardson D.L."/>
            <person name="Ermolaeva M.D."/>
            <person name="Vamathevan J.J."/>
            <person name="Bass S."/>
            <person name="Qin H."/>
            <person name="Dragoi I."/>
            <person name="Sellers P."/>
            <person name="McDonald L.A."/>
            <person name="Utterback T.R."/>
            <person name="Fleischmann R.D."/>
            <person name="Nierman W.C."/>
            <person name="White O."/>
            <person name="Salzberg S.L."/>
            <person name="Smith H.O."/>
            <person name="Colwell R.R."/>
            <person name="Mekalanos J.J."/>
            <person name="Venter J.C."/>
            <person name="Fraser C.M."/>
        </authorList>
    </citation>
    <scope>NUCLEOTIDE SEQUENCE [LARGE SCALE GENOMIC DNA]</scope>
    <source>
        <strain>ATCC 39315 / El Tor Inaba N16961</strain>
    </source>
</reference>
<reference key="2">
    <citation type="journal article" date="2013" name="PLoS Pathog.">
        <title>Dual expression profile of type VI secretion system immunity genes protects pandemic Vibrio cholerae.</title>
        <authorList>
            <person name="Miyata S.T."/>
            <person name="Unterweger D."/>
            <person name="Rudko S.P."/>
            <person name="Pukatzki S."/>
        </authorList>
    </citation>
    <scope>FUNCTION</scope>
    <scope>DISRUPTION PHENOTYPE</scope>
</reference>
<evidence type="ECO:0000269" key="1">
    <source>
    </source>
</evidence>
<evidence type="ECO:0000303" key="2">
    <source>
    </source>
</evidence>
<comment type="function">
    <text evidence="1">Plays an accessory role in VasX-mediated bacterial killing.</text>
</comment>
<comment type="disruption phenotype">
    <text evidence="1">Deletion results in an attenuated phenotype towards V.parahaemolyticus.</text>
</comment>
<gene>
    <name evidence="2" type="primary">vasW</name>
    <name type="ordered locus">VC_A0019</name>
</gene>
<protein>
    <recommendedName>
        <fullName evidence="2">Accessory protein VasW</fullName>
    </recommendedName>
</protein>
<proteinExistence type="predicted"/>
<name>VASW_VIBCH</name>
<keyword id="KW-1185">Reference proteome</keyword>
<keyword id="KW-0843">Virulence</keyword>
<feature type="chain" id="PRO_0000449210" description="Accessory protein VasW">
    <location>
        <begin position="1"/>
        <end position="295"/>
    </location>
</feature>
<organism>
    <name type="scientific">Vibrio cholerae serotype O1 (strain ATCC 39315 / El Tor Inaba N16961)</name>
    <dbReference type="NCBI Taxonomy" id="243277"/>
    <lineage>
        <taxon>Bacteria</taxon>
        <taxon>Pseudomonadati</taxon>
        <taxon>Pseudomonadota</taxon>
        <taxon>Gammaproteobacteria</taxon>
        <taxon>Vibrionales</taxon>
        <taxon>Vibrionaceae</taxon>
        <taxon>Vibrio</taxon>
    </lineage>
</organism>